<comment type="catalytic activity">
    <reaction evidence="1">
        <text>tRNA(Phe) + L-phenylalanine + ATP = L-phenylalanyl-tRNA(Phe) + AMP + diphosphate + H(+)</text>
        <dbReference type="Rhea" id="RHEA:19413"/>
        <dbReference type="Rhea" id="RHEA-COMP:9668"/>
        <dbReference type="Rhea" id="RHEA-COMP:9699"/>
        <dbReference type="ChEBI" id="CHEBI:15378"/>
        <dbReference type="ChEBI" id="CHEBI:30616"/>
        <dbReference type="ChEBI" id="CHEBI:33019"/>
        <dbReference type="ChEBI" id="CHEBI:58095"/>
        <dbReference type="ChEBI" id="CHEBI:78442"/>
        <dbReference type="ChEBI" id="CHEBI:78531"/>
        <dbReference type="ChEBI" id="CHEBI:456215"/>
        <dbReference type="EC" id="6.1.1.20"/>
    </reaction>
</comment>
<comment type="cofactor">
    <cofactor evidence="1">
        <name>Mg(2+)</name>
        <dbReference type="ChEBI" id="CHEBI:18420"/>
    </cofactor>
    <text evidence="1">Binds 2 magnesium ions per tetramer.</text>
</comment>
<comment type="subunit">
    <text evidence="1">Tetramer of two alpha and two beta subunits.</text>
</comment>
<comment type="subcellular location">
    <subcellularLocation>
        <location evidence="1">Cytoplasm</location>
    </subcellularLocation>
</comment>
<comment type="similarity">
    <text evidence="1">Belongs to the class-II aminoacyl-tRNA synthetase family. Phe-tRNA synthetase alpha subunit type 1 subfamily.</text>
</comment>
<protein>
    <recommendedName>
        <fullName evidence="1">Phenylalanine--tRNA ligase alpha subunit</fullName>
        <ecNumber evidence="1">6.1.1.20</ecNumber>
    </recommendedName>
    <alternativeName>
        <fullName evidence="1">Phenylalanyl-tRNA synthetase alpha subunit</fullName>
        <shortName evidence="1">PheRS</shortName>
    </alternativeName>
</protein>
<name>SYFA_CAUSK</name>
<evidence type="ECO:0000255" key="1">
    <source>
        <dbReference type="HAMAP-Rule" id="MF_00281"/>
    </source>
</evidence>
<feature type="chain" id="PRO_1000078829" description="Phenylalanine--tRNA ligase alpha subunit">
    <location>
        <begin position="1"/>
        <end position="362"/>
    </location>
</feature>
<feature type="binding site" evidence="1">
    <location>
        <position position="263"/>
    </location>
    <ligand>
        <name>Mg(2+)</name>
        <dbReference type="ChEBI" id="CHEBI:18420"/>
        <note>shared with beta subunit</note>
    </ligand>
</feature>
<accession>B0SXZ7</accession>
<dbReference type="EC" id="6.1.1.20" evidence="1"/>
<dbReference type="EMBL" id="CP000927">
    <property type="protein sequence ID" value="ABZ70320.1"/>
    <property type="molecule type" value="Genomic_DNA"/>
</dbReference>
<dbReference type="SMR" id="B0SXZ7"/>
<dbReference type="STRING" id="366602.Caul_1190"/>
<dbReference type="KEGG" id="cak:Caul_1190"/>
<dbReference type="eggNOG" id="COG0016">
    <property type="taxonomic scope" value="Bacteria"/>
</dbReference>
<dbReference type="HOGENOM" id="CLU_025086_0_1_5"/>
<dbReference type="OrthoDB" id="9800719at2"/>
<dbReference type="GO" id="GO:0005737">
    <property type="term" value="C:cytoplasm"/>
    <property type="evidence" value="ECO:0007669"/>
    <property type="project" value="UniProtKB-SubCell"/>
</dbReference>
<dbReference type="GO" id="GO:0005524">
    <property type="term" value="F:ATP binding"/>
    <property type="evidence" value="ECO:0007669"/>
    <property type="project" value="UniProtKB-UniRule"/>
</dbReference>
<dbReference type="GO" id="GO:0000287">
    <property type="term" value="F:magnesium ion binding"/>
    <property type="evidence" value="ECO:0007669"/>
    <property type="project" value="UniProtKB-UniRule"/>
</dbReference>
<dbReference type="GO" id="GO:0004826">
    <property type="term" value="F:phenylalanine-tRNA ligase activity"/>
    <property type="evidence" value="ECO:0007669"/>
    <property type="project" value="UniProtKB-UniRule"/>
</dbReference>
<dbReference type="GO" id="GO:0000049">
    <property type="term" value="F:tRNA binding"/>
    <property type="evidence" value="ECO:0007669"/>
    <property type="project" value="InterPro"/>
</dbReference>
<dbReference type="GO" id="GO:0006432">
    <property type="term" value="P:phenylalanyl-tRNA aminoacylation"/>
    <property type="evidence" value="ECO:0007669"/>
    <property type="project" value="UniProtKB-UniRule"/>
</dbReference>
<dbReference type="CDD" id="cd00496">
    <property type="entry name" value="PheRS_alpha_core"/>
    <property type="match status" value="1"/>
</dbReference>
<dbReference type="FunFam" id="3.30.930.10:FF:000003">
    <property type="entry name" value="Phenylalanine--tRNA ligase alpha subunit"/>
    <property type="match status" value="1"/>
</dbReference>
<dbReference type="Gene3D" id="3.30.930.10">
    <property type="entry name" value="Bira Bifunctional Protein, Domain 2"/>
    <property type="match status" value="1"/>
</dbReference>
<dbReference type="HAMAP" id="MF_00281">
    <property type="entry name" value="Phe_tRNA_synth_alpha1"/>
    <property type="match status" value="1"/>
</dbReference>
<dbReference type="InterPro" id="IPR006195">
    <property type="entry name" value="aa-tRNA-synth_II"/>
</dbReference>
<dbReference type="InterPro" id="IPR045864">
    <property type="entry name" value="aa-tRNA-synth_II/BPL/LPL"/>
</dbReference>
<dbReference type="InterPro" id="IPR004529">
    <property type="entry name" value="Phe-tRNA-synth_IIc_asu"/>
</dbReference>
<dbReference type="InterPro" id="IPR004188">
    <property type="entry name" value="Phe-tRNA_ligase_II_N"/>
</dbReference>
<dbReference type="InterPro" id="IPR022911">
    <property type="entry name" value="Phe_tRNA_ligase_alpha1_bac"/>
</dbReference>
<dbReference type="InterPro" id="IPR002319">
    <property type="entry name" value="Phenylalanyl-tRNA_Synthase"/>
</dbReference>
<dbReference type="InterPro" id="IPR010978">
    <property type="entry name" value="tRNA-bd_arm"/>
</dbReference>
<dbReference type="NCBIfam" id="TIGR00468">
    <property type="entry name" value="pheS"/>
    <property type="match status" value="1"/>
</dbReference>
<dbReference type="PANTHER" id="PTHR11538:SF41">
    <property type="entry name" value="PHENYLALANINE--TRNA LIGASE, MITOCHONDRIAL"/>
    <property type="match status" value="1"/>
</dbReference>
<dbReference type="PANTHER" id="PTHR11538">
    <property type="entry name" value="PHENYLALANYL-TRNA SYNTHETASE"/>
    <property type="match status" value="1"/>
</dbReference>
<dbReference type="Pfam" id="PF02912">
    <property type="entry name" value="Phe_tRNA-synt_N"/>
    <property type="match status" value="1"/>
</dbReference>
<dbReference type="Pfam" id="PF01409">
    <property type="entry name" value="tRNA-synt_2d"/>
    <property type="match status" value="1"/>
</dbReference>
<dbReference type="SUPFAM" id="SSF55681">
    <property type="entry name" value="Class II aaRS and biotin synthetases"/>
    <property type="match status" value="1"/>
</dbReference>
<dbReference type="SUPFAM" id="SSF46589">
    <property type="entry name" value="tRNA-binding arm"/>
    <property type="match status" value="1"/>
</dbReference>
<dbReference type="PROSITE" id="PS50862">
    <property type="entry name" value="AA_TRNA_LIGASE_II"/>
    <property type="match status" value="1"/>
</dbReference>
<keyword id="KW-0030">Aminoacyl-tRNA synthetase</keyword>
<keyword id="KW-0067">ATP-binding</keyword>
<keyword id="KW-0963">Cytoplasm</keyword>
<keyword id="KW-0436">Ligase</keyword>
<keyword id="KW-0460">Magnesium</keyword>
<keyword id="KW-0479">Metal-binding</keyword>
<keyword id="KW-0547">Nucleotide-binding</keyword>
<keyword id="KW-0648">Protein biosynthesis</keyword>
<gene>
    <name evidence="1" type="primary">pheS</name>
    <name type="ordered locus">Caul_1190</name>
</gene>
<sequence>MTDLTTLEADVLAQVAAAGDLAALDAVRVSALGKTGRVSGLLKTLGAMSPDERKERGAAINVLRDRVQTALNDKKAALETAALDARLASETLDLTLPAPRRRKGSVHPTMQTMDEMVAIFAEMGFAVAEGPDIEDDFHNFTALNFPPKHPAREMHDTFFFNPAKNEDGSDGERMLLRTHTSPVQVRTMLSQKPPIRIIAPGRTYRCDNDATHTPVFHQVEGLVIDKAIHMGHLKWTLETFLARFFETDAVKTQFRPHHFPFTEPSAETDVQCDRSGGEIKVGQGTSWLEILGCGMVHPNVLRACGIDPDEYQGFAFGMGVDRLGMLKYGMPDLRDMWSSDGRWLAHYGFSAFAAPNAASGLS</sequence>
<reference key="1">
    <citation type="submission" date="2008-01" db="EMBL/GenBank/DDBJ databases">
        <title>Complete sequence of chromosome of Caulobacter sp. K31.</title>
        <authorList>
            <consortium name="US DOE Joint Genome Institute"/>
            <person name="Copeland A."/>
            <person name="Lucas S."/>
            <person name="Lapidus A."/>
            <person name="Barry K."/>
            <person name="Glavina del Rio T."/>
            <person name="Dalin E."/>
            <person name="Tice H."/>
            <person name="Pitluck S."/>
            <person name="Bruce D."/>
            <person name="Goodwin L."/>
            <person name="Thompson L.S."/>
            <person name="Brettin T."/>
            <person name="Detter J.C."/>
            <person name="Han C."/>
            <person name="Schmutz J."/>
            <person name="Larimer F."/>
            <person name="Land M."/>
            <person name="Hauser L."/>
            <person name="Kyrpides N."/>
            <person name="Kim E."/>
            <person name="Stephens C."/>
            <person name="Richardson P."/>
        </authorList>
    </citation>
    <scope>NUCLEOTIDE SEQUENCE [LARGE SCALE GENOMIC DNA]</scope>
    <source>
        <strain>K31</strain>
    </source>
</reference>
<organism>
    <name type="scientific">Caulobacter sp. (strain K31)</name>
    <dbReference type="NCBI Taxonomy" id="366602"/>
    <lineage>
        <taxon>Bacteria</taxon>
        <taxon>Pseudomonadati</taxon>
        <taxon>Pseudomonadota</taxon>
        <taxon>Alphaproteobacteria</taxon>
        <taxon>Caulobacterales</taxon>
        <taxon>Caulobacteraceae</taxon>
        <taxon>Caulobacter</taxon>
    </lineage>
</organism>
<proteinExistence type="inferred from homology"/>